<dbReference type="EMBL" id="BX255894">
    <property type="protein sequence ID" value="CAK04774.1"/>
    <property type="status" value="ALT_SEQ"/>
    <property type="molecule type" value="Genomic_DNA"/>
</dbReference>
<dbReference type="EMBL" id="BC125962">
    <property type="protein sequence ID" value="AAI25963.1"/>
    <property type="molecule type" value="mRNA"/>
</dbReference>
<dbReference type="RefSeq" id="NP_001071203.1">
    <property type="nucleotide sequence ID" value="NM_001077735.2"/>
</dbReference>
<dbReference type="SMR" id="A0JMQ0"/>
<dbReference type="BioGRID" id="607473">
    <property type="interactions" value="1"/>
</dbReference>
<dbReference type="FunCoup" id="A0JMQ0">
    <property type="interactions" value="1594"/>
</dbReference>
<dbReference type="STRING" id="7955.ENSDARP00000120969"/>
<dbReference type="PaxDb" id="7955-ENSDARP00000120969"/>
<dbReference type="PeptideAtlas" id="A0JMQ0"/>
<dbReference type="GeneID" id="777627"/>
<dbReference type="KEGG" id="dre:777627"/>
<dbReference type="AGR" id="ZFIN:ZDB-GENE-030219-109"/>
<dbReference type="CTD" id="23246"/>
<dbReference type="ZFIN" id="ZDB-GENE-030219-109">
    <property type="gene designation" value="bop1"/>
</dbReference>
<dbReference type="eggNOG" id="KOG0650">
    <property type="taxonomic scope" value="Eukaryota"/>
</dbReference>
<dbReference type="InParanoid" id="A0JMQ0"/>
<dbReference type="OrthoDB" id="5571054at2759"/>
<dbReference type="PhylomeDB" id="A0JMQ0"/>
<dbReference type="PRO" id="PR:A0JMQ0"/>
<dbReference type="Proteomes" id="UP000000437">
    <property type="component" value="Chromosome 19"/>
</dbReference>
<dbReference type="GO" id="GO:0005654">
    <property type="term" value="C:nucleoplasm"/>
    <property type="evidence" value="ECO:0007669"/>
    <property type="project" value="UniProtKB-SubCell"/>
</dbReference>
<dbReference type="GO" id="GO:0070545">
    <property type="term" value="C:PeBoW complex"/>
    <property type="evidence" value="ECO:0000250"/>
    <property type="project" value="UniProtKB"/>
</dbReference>
<dbReference type="GO" id="GO:0030687">
    <property type="term" value="C:preribosome, large subunit precursor"/>
    <property type="evidence" value="ECO:0000318"/>
    <property type="project" value="GO_Central"/>
</dbReference>
<dbReference type="GO" id="GO:0043021">
    <property type="term" value="F:ribonucleoprotein complex binding"/>
    <property type="evidence" value="ECO:0000318"/>
    <property type="project" value="GO_Central"/>
</dbReference>
<dbReference type="GO" id="GO:0000466">
    <property type="term" value="P:maturation of 5.8S rRNA from tricistronic rRNA transcript (SSU-rRNA, 5.8S rRNA, LSU-rRNA)"/>
    <property type="evidence" value="ECO:0007669"/>
    <property type="project" value="UniProtKB-UniRule"/>
</dbReference>
<dbReference type="GO" id="GO:0000463">
    <property type="term" value="P:maturation of LSU-rRNA from tricistronic rRNA transcript (SSU-rRNA, 5.8S rRNA, LSU-rRNA)"/>
    <property type="evidence" value="ECO:0000250"/>
    <property type="project" value="UniProtKB"/>
</dbReference>
<dbReference type="GO" id="GO:0051726">
    <property type="term" value="P:regulation of cell cycle"/>
    <property type="evidence" value="ECO:0000250"/>
    <property type="project" value="UniProtKB"/>
</dbReference>
<dbReference type="CDD" id="cd00200">
    <property type="entry name" value="WD40"/>
    <property type="match status" value="1"/>
</dbReference>
<dbReference type="FunFam" id="2.130.10.10:FF:000061">
    <property type="entry name" value="Ribosome biogenesis protein BOP1 homolog"/>
    <property type="match status" value="1"/>
</dbReference>
<dbReference type="Gene3D" id="2.130.10.10">
    <property type="entry name" value="YVTN repeat-like/Quinoprotein amine dehydrogenase"/>
    <property type="match status" value="1"/>
</dbReference>
<dbReference type="HAMAP" id="MF_03027">
    <property type="entry name" value="BOP1"/>
    <property type="match status" value="1"/>
</dbReference>
<dbReference type="InterPro" id="IPR028598">
    <property type="entry name" value="BOP1/Erb1"/>
</dbReference>
<dbReference type="InterPro" id="IPR012953">
    <property type="entry name" value="BOP1_N_dom"/>
</dbReference>
<dbReference type="InterPro" id="IPR015943">
    <property type="entry name" value="WD40/YVTN_repeat-like_dom_sf"/>
</dbReference>
<dbReference type="InterPro" id="IPR019775">
    <property type="entry name" value="WD40_repeat_CS"/>
</dbReference>
<dbReference type="InterPro" id="IPR036322">
    <property type="entry name" value="WD40_repeat_dom_sf"/>
</dbReference>
<dbReference type="InterPro" id="IPR001680">
    <property type="entry name" value="WD40_rpt"/>
</dbReference>
<dbReference type="PANTHER" id="PTHR17605:SF0">
    <property type="entry name" value="RIBOSOME BIOGENESIS PROTEIN BOP1"/>
    <property type="match status" value="1"/>
</dbReference>
<dbReference type="PANTHER" id="PTHR17605">
    <property type="entry name" value="RIBOSOME BIOGENESIS PROTEIN BOP1 BLOCK OF PROLIFERATION 1 PROTEIN"/>
    <property type="match status" value="1"/>
</dbReference>
<dbReference type="Pfam" id="PF08145">
    <property type="entry name" value="BOP1NT"/>
    <property type="match status" value="1"/>
</dbReference>
<dbReference type="Pfam" id="PF00400">
    <property type="entry name" value="WD40"/>
    <property type="match status" value="4"/>
</dbReference>
<dbReference type="SMART" id="SM01035">
    <property type="entry name" value="BOP1NT"/>
    <property type="match status" value="1"/>
</dbReference>
<dbReference type="SMART" id="SM00320">
    <property type="entry name" value="WD40"/>
    <property type="match status" value="7"/>
</dbReference>
<dbReference type="SUPFAM" id="SSF50978">
    <property type="entry name" value="WD40 repeat-like"/>
    <property type="match status" value="1"/>
</dbReference>
<dbReference type="PROSITE" id="PS00678">
    <property type="entry name" value="WD_REPEATS_1"/>
    <property type="match status" value="1"/>
</dbReference>
<dbReference type="PROSITE" id="PS50082">
    <property type="entry name" value="WD_REPEATS_2"/>
    <property type="match status" value="3"/>
</dbReference>
<dbReference type="PROSITE" id="PS50294">
    <property type="entry name" value="WD_REPEATS_REGION"/>
    <property type="match status" value="2"/>
</dbReference>
<comment type="function">
    <text evidence="1">Component of the PeBoW complex, which is required for maturation of 28S and 5.8S ribosomal RNAs and formation of the 60S ribosome.</text>
</comment>
<comment type="subunit">
    <text evidence="1">Component of the PeBoW complex, composed of bop1, pes1 and wdr12. The complex is held together by bop1, which interacts with pes1 via its N-terminal domain and with wdr12 via a high-affinity interaction between the seven-bladed beta-propeller domains of the 2 proteins. The PeBoW complex associates with the 66S pre-ribosome.</text>
</comment>
<comment type="subcellular location">
    <subcellularLocation>
        <location evidence="1">Nucleus</location>
        <location evidence="1">Nucleolus</location>
    </subcellularLocation>
    <subcellularLocation>
        <location evidence="1">Nucleus</location>
        <location evidence="1">Nucleoplasm</location>
    </subcellularLocation>
</comment>
<comment type="similarity">
    <text evidence="1">Belongs to the WD repeat BOP1/ERB1 family.</text>
</comment>
<comment type="sequence caution" evidence="3">
    <conflict type="erroneous gene model prediction">
        <sequence resource="EMBL-CDS" id="CAK04774"/>
    </conflict>
</comment>
<feature type="chain" id="PRO_0000370387" description="Ribosome biogenesis protein bop1">
    <location>
        <begin position="1"/>
        <end position="777"/>
    </location>
</feature>
<feature type="repeat" description="WD 1">
    <location>
        <begin position="441"/>
        <end position="480"/>
    </location>
</feature>
<feature type="repeat" description="WD 2">
    <location>
        <begin position="482"/>
        <end position="522"/>
    </location>
</feature>
<feature type="repeat" description="WD 3">
    <location>
        <begin position="562"/>
        <end position="605"/>
    </location>
</feature>
<feature type="repeat" description="WD 4">
    <location>
        <begin position="608"/>
        <end position="646"/>
    </location>
</feature>
<feature type="repeat" description="WD 5">
    <location>
        <begin position="649"/>
        <end position="688"/>
    </location>
</feature>
<feature type="repeat" description="WD 6">
    <location>
        <begin position="692"/>
        <end position="731"/>
    </location>
</feature>
<feature type="repeat" description="WD 7">
    <location>
        <begin position="747"/>
        <end position="777"/>
    </location>
</feature>
<feature type="region of interest" description="Disordered" evidence="2">
    <location>
        <begin position="1"/>
        <end position="140"/>
    </location>
</feature>
<feature type="compositionally biased region" description="Basic and acidic residues" evidence="2">
    <location>
        <begin position="22"/>
        <end position="33"/>
    </location>
</feature>
<feature type="compositionally biased region" description="Acidic residues" evidence="2">
    <location>
        <begin position="34"/>
        <end position="47"/>
    </location>
</feature>
<feature type="compositionally biased region" description="Acidic residues" evidence="2">
    <location>
        <begin position="56"/>
        <end position="76"/>
    </location>
</feature>
<feature type="compositionally biased region" description="Acidic residues" evidence="2">
    <location>
        <begin position="84"/>
        <end position="94"/>
    </location>
</feature>
<feature type="compositionally biased region" description="Basic and acidic residues" evidence="2">
    <location>
        <begin position="95"/>
        <end position="106"/>
    </location>
</feature>
<feature type="compositionally biased region" description="Basic residues" evidence="2">
    <location>
        <begin position="115"/>
        <end position="125"/>
    </location>
</feature>
<feature type="compositionally biased region" description="Basic and acidic residues" evidence="2">
    <location>
        <begin position="126"/>
        <end position="140"/>
    </location>
</feature>
<reference key="1">
    <citation type="journal article" date="2013" name="Nature">
        <title>The zebrafish reference genome sequence and its relationship to the human genome.</title>
        <authorList>
            <person name="Howe K."/>
            <person name="Clark M.D."/>
            <person name="Torroja C.F."/>
            <person name="Torrance J."/>
            <person name="Berthelot C."/>
            <person name="Muffato M."/>
            <person name="Collins J.E."/>
            <person name="Humphray S."/>
            <person name="McLaren K."/>
            <person name="Matthews L."/>
            <person name="McLaren S."/>
            <person name="Sealy I."/>
            <person name="Caccamo M."/>
            <person name="Churcher C."/>
            <person name="Scott C."/>
            <person name="Barrett J.C."/>
            <person name="Koch R."/>
            <person name="Rauch G.J."/>
            <person name="White S."/>
            <person name="Chow W."/>
            <person name="Kilian B."/>
            <person name="Quintais L.T."/>
            <person name="Guerra-Assuncao J.A."/>
            <person name="Zhou Y."/>
            <person name="Gu Y."/>
            <person name="Yen J."/>
            <person name="Vogel J.H."/>
            <person name="Eyre T."/>
            <person name="Redmond S."/>
            <person name="Banerjee R."/>
            <person name="Chi J."/>
            <person name="Fu B."/>
            <person name="Langley E."/>
            <person name="Maguire S.F."/>
            <person name="Laird G.K."/>
            <person name="Lloyd D."/>
            <person name="Kenyon E."/>
            <person name="Donaldson S."/>
            <person name="Sehra H."/>
            <person name="Almeida-King J."/>
            <person name="Loveland J."/>
            <person name="Trevanion S."/>
            <person name="Jones M."/>
            <person name="Quail M."/>
            <person name="Willey D."/>
            <person name="Hunt A."/>
            <person name="Burton J."/>
            <person name="Sims S."/>
            <person name="McLay K."/>
            <person name="Plumb B."/>
            <person name="Davis J."/>
            <person name="Clee C."/>
            <person name="Oliver K."/>
            <person name="Clark R."/>
            <person name="Riddle C."/>
            <person name="Elliot D."/>
            <person name="Threadgold G."/>
            <person name="Harden G."/>
            <person name="Ware D."/>
            <person name="Begum S."/>
            <person name="Mortimore B."/>
            <person name="Kerry G."/>
            <person name="Heath P."/>
            <person name="Phillimore B."/>
            <person name="Tracey A."/>
            <person name="Corby N."/>
            <person name="Dunn M."/>
            <person name="Johnson C."/>
            <person name="Wood J."/>
            <person name="Clark S."/>
            <person name="Pelan S."/>
            <person name="Griffiths G."/>
            <person name="Smith M."/>
            <person name="Glithero R."/>
            <person name="Howden P."/>
            <person name="Barker N."/>
            <person name="Lloyd C."/>
            <person name="Stevens C."/>
            <person name="Harley J."/>
            <person name="Holt K."/>
            <person name="Panagiotidis G."/>
            <person name="Lovell J."/>
            <person name="Beasley H."/>
            <person name="Henderson C."/>
            <person name="Gordon D."/>
            <person name="Auger K."/>
            <person name="Wright D."/>
            <person name="Collins J."/>
            <person name="Raisen C."/>
            <person name="Dyer L."/>
            <person name="Leung K."/>
            <person name="Robertson L."/>
            <person name="Ambridge K."/>
            <person name="Leongamornlert D."/>
            <person name="McGuire S."/>
            <person name="Gilderthorp R."/>
            <person name="Griffiths C."/>
            <person name="Manthravadi D."/>
            <person name="Nichol S."/>
            <person name="Barker G."/>
            <person name="Whitehead S."/>
            <person name="Kay M."/>
            <person name="Brown J."/>
            <person name="Murnane C."/>
            <person name="Gray E."/>
            <person name="Humphries M."/>
            <person name="Sycamore N."/>
            <person name="Barker D."/>
            <person name="Saunders D."/>
            <person name="Wallis J."/>
            <person name="Babbage A."/>
            <person name="Hammond S."/>
            <person name="Mashreghi-Mohammadi M."/>
            <person name="Barr L."/>
            <person name="Martin S."/>
            <person name="Wray P."/>
            <person name="Ellington A."/>
            <person name="Matthews N."/>
            <person name="Ellwood M."/>
            <person name="Woodmansey R."/>
            <person name="Clark G."/>
            <person name="Cooper J."/>
            <person name="Tromans A."/>
            <person name="Grafham D."/>
            <person name="Skuce C."/>
            <person name="Pandian R."/>
            <person name="Andrews R."/>
            <person name="Harrison E."/>
            <person name="Kimberley A."/>
            <person name="Garnett J."/>
            <person name="Fosker N."/>
            <person name="Hall R."/>
            <person name="Garner P."/>
            <person name="Kelly D."/>
            <person name="Bird C."/>
            <person name="Palmer S."/>
            <person name="Gehring I."/>
            <person name="Berger A."/>
            <person name="Dooley C.M."/>
            <person name="Ersan-Urun Z."/>
            <person name="Eser C."/>
            <person name="Geiger H."/>
            <person name="Geisler M."/>
            <person name="Karotki L."/>
            <person name="Kirn A."/>
            <person name="Konantz J."/>
            <person name="Konantz M."/>
            <person name="Oberlander M."/>
            <person name="Rudolph-Geiger S."/>
            <person name="Teucke M."/>
            <person name="Lanz C."/>
            <person name="Raddatz G."/>
            <person name="Osoegawa K."/>
            <person name="Zhu B."/>
            <person name="Rapp A."/>
            <person name="Widaa S."/>
            <person name="Langford C."/>
            <person name="Yang F."/>
            <person name="Schuster S.C."/>
            <person name="Carter N.P."/>
            <person name="Harrow J."/>
            <person name="Ning Z."/>
            <person name="Herrero J."/>
            <person name="Searle S.M."/>
            <person name="Enright A."/>
            <person name="Geisler R."/>
            <person name="Plasterk R.H."/>
            <person name="Lee C."/>
            <person name="Westerfield M."/>
            <person name="de Jong P.J."/>
            <person name="Zon L.I."/>
            <person name="Postlethwait J.H."/>
            <person name="Nusslein-Volhard C."/>
            <person name="Hubbard T.J."/>
            <person name="Roest Crollius H."/>
            <person name="Rogers J."/>
            <person name="Stemple D.L."/>
        </authorList>
    </citation>
    <scope>NUCLEOTIDE SEQUENCE [LARGE SCALE GENOMIC DNA]</scope>
    <source>
        <strain>Tuebingen</strain>
    </source>
</reference>
<reference key="2">
    <citation type="submission" date="2006-10" db="EMBL/GenBank/DDBJ databases">
        <authorList>
            <consortium name="NIH - Zebrafish Gene Collection (ZGC) project"/>
        </authorList>
    </citation>
    <scope>NUCLEOTIDE SEQUENCE [LARGE SCALE MRNA]</scope>
</reference>
<gene>
    <name type="primary">bop1</name>
    <name type="ORF">si:ch211-251g8.4</name>
</gene>
<accession>A0JMQ0</accession>
<accession>Q1LXV3</accession>
<proteinExistence type="evidence at transcript level"/>
<organism>
    <name type="scientific">Danio rerio</name>
    <name type="common">Zebrafish</name>
    <name type="synonym">Brachydanio rerio</name>
    <dbReference type="NCBI Taxonomy" id="7955"/>
    <lineage>
        <taxon>Eukaryota</taxon>
        <taxon>Metazoa</taxon>
        <taxon>Chordata</taxon>
        <taxon>Craniata</taxon>
        <taxon>Vertebrata</taxon>
        <taxon>Euteleostomi</taxon>
        <taxon>Actinopterygii</taxon>
        <taxon>Neopterygii</taxon>
        <taxon>Teleostei</taxon>
        <taxon>Ostariophysi</taxon>
        <taxon>Cypriniformes</taxon>
        <taxon>Danionidae</taxon>
        <taxon>Danioninae</taxon>
        <taxon>Danio</taxon>
    </lineage>
</organism>
<evidence type="ECO:0000255" key="1">
    <source>
        <dbReference type="HAMAP-Rule" id="MF_03027"/>
    </source>
</evidence>
<evidence type="ECO:0000256" key="2">
    <source>
        <dbReference type="SAM" id="MobiDB-lite"/>
    </source>
</evidence>
<evidence type="ECO:0000305" key="3"/>
<name>BOP1_DANRE</name>
<sequence length="777" mass="88365">MSKLKNKKRHLEENEEEQLPIFDKDSGEDGHLDDGDEDPADLSDSEESVFSGLEDSGSDDEDDDEDDDEDDDDKDGSEEKSSDAEEDKADDDDGDLKLSAKDDVKPQVDSQNSKEKKKKKRKGKSVLKDGGEEDVASGRDEALKITSQVDEYDHDTSDEEDIRNTVGNIPMEWYKDYPHIGYDLDGKKIFKPIRNKDELDEFLDKMENPDYWRTVQDKMTGADIRLSDEQVDLVHRLQQGKFGDVNFNEYEPAVDFFSNEVMIHPVTNRPQDKRSFIPSLIEKEKVGKLVHAIKMGWIKPRRPKETTPQYYDLWAKEDPNSILGRHKMHVPAPKMKLPGHEESYNPPPEYLLSEEERLAWAAQDPEDRKLSFLPQKFSCLRAVPAFSRFIHERFERCLDLYLCPRQRKMRVNVNPEDLIPKLPKPKDLQPFPTTQSLVYRGHSSLVRSISVSPSGQWLVSGSDDCTVRFWEVSTARCLKTVQVGGAVKGVAWNPNPSICLVAVSYEDSVLLLNPALGDRLLCTATDQLISSYAEPEEVKEQPVQWLVSEGEGHEQGHRLVLKHPKAVRQVTWHAKGDYLACVLPDSSSSVQVLIHQVSKRRTQNPFRKSKGLVQCVSFHPVRPYFFVATQRYVRVYNLIKQELTKKLMANCKWISSMAIHPGGDNVICGSYDCRLAWFDLDLSTKPYKVLRHHKKALRSVSFHSHYPLLASGSDDGSVIVCHGMVYNDLLQNPLIVPVKVLKGHSITHDLGVLDVTFHPTQPWVFSSGADATIRLYT</sequence>
<protein>
    <recommendedName>
        <fullName evidence="1">Ribosome biogenesis protein bop1</fullName>
    </recommendedName>
    <alternativeName>
        <fullName evidence="1">Block of proliferation 1 protein</fullName>
    </alternativeName>
</protein>
<keyword id="KW-0539">Nucleus</keyword>
<keyword id="KW-1185">Reference proteome</keyword>
<keyword id="KW-0677">Repeat</keyword>
<keyword id="KW-0690">Ribosome biogenesis</keyword>
<keyword id="KW-0698">rRNA processing</keyword>
<keyword id="KW-0853">WD repeat</keyword>